<comment type="function">
    <text evidence="1">Bifunctional enzyme which can phosphorylate or dephosphorylate isocitrate dehydrogenase (IDH) on a specific serine residue. This is a regulatory mechanism which enables bacteria to bypass the Krebs cycle via the glyoxylate shunt in response to the source of carbon. When bacteria are grown on glucose, IDH is fully active and unphosphorylated, but when grown on acetate or ethanol, the activity of IDH declines drastically concomitant with its phosphorylation.</text>
</comment>
<comment type="catalytic activity">
    <reaction evidence="1">
        <text>L-seryl-[isocitrate dehydrogenase] + ATP = O-phospho-L-seryl-[isocitrate dehydrogenase] + ADP + H(+)</text>
        <dbReference type="Rhea" id="RHEA:43540"/>
        <dbReference type="Rhea" id="RHEA-COMP:10605"/>
        <dbReference type="Rhea" id="RHEA-COMP:10606"/>
        <dbReference type="ChEBI" id="CHEBI:15378"/>
        <dbReference type="ChEBI" id="CHEBI:29999"/>
        <dbReference type="ChEBI" id="CHEBI:30616"/>
        <dbReference type="ChEBI" id="CHEBI:83421"/>
        <dbReference type="ChEBI" id="CHEBI:456216"/>
        <dbReference type="EC" id="2.7.11.5"/>
    </reaction>
</comment>
<comment type="subcellular location">
    <subcellularLocation>
        <location evidence="1">Cytoplasm</location>
    </subcellularLocation>
</comment>
<comment type="similarity">
    <text evidence="1">Belongs to the AceK family.</text>
</comment>
<gene>
    <name evidence="1" type="primary">aceK</name>
    <name type="ordered locus">SeSA_A4397</name>
</gene>
<accession>B4TQM3</accession>
<dbReference type="EC" id="2.7.11.5" evidence="1"/>
<dbReference type="EC" id="3.1.3.-" evidence="1"/>
<dbReference type="EMBL" id="CP001127">
    <property type="protein sequence ID" value="ACF92712.1"/>
    <property type="molecule type" value="Genomic_DNA"/>
</dbReference>
<dbReference type="RefSeq" id="WP_001137266.1">
    <property type="nucleotide sequence ID" value="NC_011094.1"/>
</dbReference>
<dbReference type="SMR" id="B4TQM3"/>
<dbReference type="KEGG" id="sew:SeSA_A4397"/>
<dbReference type="HOGENOM" id="CLU_033804_1_1_6"/>
<dbReference type="Proteomes" id="UP000001865">
    <property type="component" value="Chromosome"/>
</dbReference>
<dbReference type="GO" id="GO:0005737">
    <property type="term" value="C:cytoplasm"/>
    <property type="evidence" value="ECO:0007669"/>
    <property type="project" value="UniProtKB-SubCell"/>
</dbReference>
<dbReference type="GO" id="GO:0008772">
    <property type="term" value="F:[isocitrate dehydrogenase (NADP+)] kinase activity"/>
    <property type="evidence" value="ECO:0007669"/>
    <property type="project" value="UniProtKB-UniRule"/>
</dbReference>
<dbReference type="GO" id="GO:0016208">
    <property type="term" value="F:AMP binding"/>
    <property type="evidence" value="ECO:0007669"/>
    <property type="project" value="TreeGrafter"/>
</dbReference>
<dbReference type="GO" id="GO:0005524">
    <property type="term" value="F:ATP binding"/>
    <property type="evidence" value="ECO:0007669"/>
    <property type="project" value="UniProtKB-UniRule"/>
</dbReference>
<dbReference type="GO" id="GO:0004721">
    <property type="term" value="F:phosphoprotein phosphatase activity"/>
    <property type="evidence" value="ECO:0007669"/>
    <property type="project" value="UniProtKB-KW"/>
</dbReference>
<dbReference type="GO" id="GO:0004674">
    <property type="term" value="F:protein serine/threonine kinase activity"/>
    <property type="evidence" value="ECO:0007669"/>
    <property type="project" value="UniProtKB-KW"/>
</dbReference>
<dbReference type="GO" id="GO:0006006">
    <property type="term" value="P:glucose metabolic process"/>
    <property type="evidence" value="ECO:0007669"/>
    <property type="project" value="InterPro"/>
</dbReference>
<dbReference type="GO" id="GO:0006097">
    <property type="term" value="P:glyoxylate cycle"/>
    <property type="evidence" value="ECO:0007669"/>
    <property type="project" value="UniProtKB-UniRule"/>
</dbReference>
<dbReference type="GO" id="GO:0006099">
    <property type="term" value="P:tricarboxylic acid cycle"/>
    <property type="evidence" value="ECO:0007669"/>
    <property type="project" value="UniProtKB-UniRule"/>
</dbReference>
<dbReference type="HAMAP" id="MF_00747">
    <property type="entry name" value="AceK"/>
    <property type="match status" value="1"/>
</dbReference>
<dbReference type="InterPro" id="IPR046855">
    <property type="entry name" value="AceK_kinase"/>
</dbReference>
<dbReference type="InterPro" id="IPR046854">
    <property type="entry name" value="AceK_regulatory"/>
</dbReference>
<dbReference type="InterPro" id="IPR010452">
    <property type="entry name" value="Isocitrate_DH_AceK"/>
</dbReference>
<dbReference type="NCBIfam" id="NF002804">
    <property type="entry name" value="PRK02946.1"/>
    <property type="match status" value="1"/>
</dbReference>
<dbReference type="PANTHER" id="PTHR39559">
    <property type="match status" value="1"/>
</dbReference>
<dbReference type="PANTHER" id="PTHR39559:SF1">
    <property type="entry name" value="ISOCITRATE DEHYDROGENASE KINASE_PHOSPHATASE"/>
    <property type="match status" value="1"/>
</dbReference>
<dbReference type="Pfam" id="PF06315">
    <property type="entry name" value="AceK_kinase"/>
    <property type="match status" value="1"/>
</dbReference>
<dbReference type="Pfam" id="PF20423">
    <property type="entry name" value="AceK_regulatory"/>
    <property type="match status" value="1"/>
</dbReference>
<dbReference type="PIRSF" id="PIRSF000719">
    <property type="entry name" value="AceK"/>
    <property type="match status" value="1"/>
</dbReference>
<sequence length="583" mass="67956">MPRGLELLIAQTILQGFDAQYGRFLEVTSGAQQRFEQADWHAVQQAMKSRIHLYDHHVGLVVEQLRCITDGKSTDADFLLRVKEHYTRLLPDYPRFEIAESFFNSVYCRLFDHRSLTPERLFIFSSQPERRFRTIPRPLAKDFFPDHGWEPLLMRILSDLPLRLPWQNKSRDIRYIIAHLTETLGEDALPRCHVQVANELFYRNKAAWLVGKLTTPDGTLPFLLPIHRTDEGELFVDTCLTTTAEASIVFGFARSYFMVYAPLPAALVEWLREILPGKTTAELYMAIGCQKHAKTESYREYLCYLAESDEKFIEAPGIRGMVMLVFTLPGFDRVFKIIKDKFAPQKEMSAAHVRACYQLVKEHDRVGRMADTQEFENFVLDKRQIDPALMALLRQEAPEKITDLGEHIVIRHLYIERRMVPLNIWLEQVEGQQLRDAIEEYGNAIRQLAAANIFPGDMLFKNFGVTRHGRVVFYDYDEICYMTEVNFRDIPPARYPEDELASEPWYSVSPGDVFPEEFRHWLCADPRIGPLFEEMHADLFRADYWRALQTRIKEGHVEDVYAYRRRQRFSVRYGAISSTANSS</sequence>
<organism>
    <name type="scientific">Salmonella schwarzengrund (strain CVM19633)</name>
    <dbReference type="NCBI Taxonomy" id="439843"/>
    <lineage>
        <taxon>Bacteria</taxon>
        <taxon>Pseudomonadati</taxon>
        <taxon>Pseudomonadota</taxon>
        <taxon>Gammaproteobacteria</taxon>
        <taxon>Enterobacterales</taxon>
        <taxon>Enterobacteriaceae</taxon>
        <taxon>Salmonella</taxon>
    </lineage>
</organism>
<reference key="1">
    <citation type="journal article" date="2011" name="J. Bacteriol.">
        <title>Comparative genomics of 28 Salmonella enterica isolates: evidence for CRISPR-mediated adaptive sublineage evolution.</title>
        <authorList>
            <person name="Fricke W.F."/>
            <person name="Mammel M.K."/>
            <person name="McDermott P.F."/>
            <person name="Tartera C."/>
            <person name="White D.G."/>
            <person name="Leclerc J.E."/>
            <person name="Ravel J."/>
            <person name="Cebula T.A."/>
        </authorList>
    </citation>
    <scope>NUCLEOTIDE SEQUENCE [LARGE SCALE GENOMIC DNA]</scope>
    <source>
        <strain>CVM19633</strain>
    </source>
</reference>
<name>ACEK_SALSV</name>
<protein>
    <recommendedName>
        <fullName evidence="1">Isocitrate dehydrogenase kinase/phosphatase</fullName>
        <shortName evidence="1">IDH kinase/phosphatase</shortName>
        <shortName evidence="1">IDHK/P</shortName>
        <ecNumber evidence="1">2.7.11.5</ecNumber>
        <ecNumber evidence="1">3.1.3.-</ecNumber>
    </recommendedName>
</protein>
<feature type="chain" id="PRO_1000133283" description="Isocitrate dehydrogenase kinase/phosphatase">
    <location>
        <begin position="1"/>
        <end position="583"/>
    </location>
</feature>
<feature type="active site" evidence="1">
    <location>
        <position position="371"/>
    </location>
</feature>
<feature type="binding site" evidence="1">
    <location>
        <begin position="315"/>
        <end position="321"/>
    </location>
    <ligand>
        <name>ATP</name>
        <dbReference type="ChEBI" id="CHEBI:30616"/>
    </ligand>
</feature>
<feature type="binding site" evidence="1">
    <location>
        <position position="336"/>
    </location>
    <ligand>
        <name>ATP</name>
        <dbReference type="ChEBI" id="CHEBI:30616"/>
    </ligand>
</feature>
<proteinExistence type="inferred from homology"/>
<keyword id="KW-0067">ATP-binding</keyword>
<keyword id="KW-0963">Cytoplasm</keyword>
<keyword id="KW-0329">Glyoxylate bypass</keyword>
<keyword id="KW-0378">Hydrolase</keyword>
<keyword id="KW-0418">Kinase</keyword>
<keyword id="KW-0547">Nucleotide-binding</keyword>
<keyword id="KW-0904">Protein phosphatase</keyword>
<keyword id="KW-0723">Serine/threonine-protein kinase</keyword>
<keyword id="KW-0808">Transferase</keyword>
<keyword id="KW-0816">Tricarboxylic acid cycle</keyword>
<evidence type="ECO:0000255" key="1">
    <source>
        <dbReference type="HAMAP-Rule" id="MF_00747"/>
    </source>
</evidence>